<dbReference type="EMBL" id="AF461423">
    <property type="protein sequence ID" value="AAM44230.1"/>
    <property type="molecule type" value="mRNA"/>
</dbReference>
<dbReference type="EMBL" id="BC112425">
    <property type="protein sequence ID" value="AAI12426.1"/>
    <property type="molecule type" value="mRNA"/>
</dbReference>
<dbReference type="CCDS" id="CCDS39503.2"/>
<dbReference type="RefSeq" id="NP_653131.3">
    <property type="nucleotide sequence ID" value="NM_144548.2"/>
</dbReference>
<dbReference type="SMR" id="Q8K4B4"/>
<dbReference type="ComplexPortal" id="CPX-389">
    <property type="entry name" value="Interleukin-23-receptor complex"/>
</dbReference>
<dbReference type="FunCoup" id="Q8K4B4">
    <property type="interactions" value="375"/>
</dbReference>
<dbReference type="STRING" id="10090.ENSMUSP00000113342"/>
<dbReference type="ChEMBL" id="CHEMBL4523394"/>
<dbReference type="GlyCosmos" id="Q8K4B4">
    <property type="glycosylation" value="3 sites, No reported glycans"/>
</dbReference>
<dbReference type="GlyGen" id="Q8K4B4">
    <property type="glycosylation" value="4 sites, 1 O-linked glycan (1 site)"/>
</dbReference>
<dbReference type="iPTMnet" id="Q8K4B4"/>
<dbReference type="PhosphoSitePlus" id="Q8K4B4"/>
<dbReference type="PaxDb" id="10090-ENSMUSP00000113342"/>
<dbReference type="ProteomicsDB" id="269473"/>
<dbReference type="DNASU" id="209590"/>
<dbReference type="Ensembl" id="ENSMUST00000118364.2">
    <property type="protein sequence ID" value="ENSMUSP00000113342.3"/>
    <property type="gene ID" value="ENSMUSG00000049093.10"/>
</dbReference>
<dbReference type="GeneID" id="209590"/>
<dbReference type="KEGG" id="mmu:209590"/>
<dbReference type="AGR" id="MGI:2181693"/>
<dbReference type="CTD" id="149233"/>
<dbReference type="MGI" id="MGI:2181693">
    <property type="gene designation" value="Il23r"/>
</dbReference>
<dbReference type="eggNOG" id="ENOG502QUIH">
    <property type="taxonomic scope" value="Eukaryota"/>
</dbReference>
<dbReference type="GeneTree" id="ENSGT00530000064198"/>
<dbReference type="InParanoid" id="Q8K4B4"/>
<dbReference type="OrthoDB" id="9897281at2759"/>
<dbReference type="PhylomeDB" id="Q8K4B4"/>
<dbReference type="Reactome" id="R-MMU-9020933">
    <property type="pathway name" value="Interleukin-23 signaling"/>
</dbReference>
<dbReference type="BioGRID-ORCS" id="209590">
    <property type="hits" value="3 hits in 77 CRISPR screens"/>
</dbReference>
<dbReference type="PRO" id="PR:Q8K4B4"/>
<dbReference type="Proteomes" id="UP000000589">
    <property type="component" value="Chromosome 6"/>
</dbReference>
<dbReference type="RNAct" id="Q8K4B4">
    <property type="molecule type" value="protein"/>
</dbReference>
<dbReference type="GO" id="GO:0009986">
    <property type="term" value="C:cell surface"/>
    <property type="evidence" value="ECO:0007669"/>
    <property type="project" value="Ensembl"/>
</dbReference>
<dbReference type="GO" id="GO:0072536">
    <property type="term" value="C:interleukin-23 receptor complex"/>
    <property type="evidence" value="ECO:0007669"/>
    <property type="project" value="Ensembl"/>
</dbReference>
<dbReference type="GO" id="GO:0005886">
    <property type="term" value="C:plasma membrane"/>
    <property type="evidence" value="ECO:0000266"/>
    <property type="project" value="MGI"/>
</dbReference>
<dbReference type="GO" id="GO:0043235">
    <property type="term" value="C:receptor complex"/>
    <property type="evidence" value="ECO:0000266"/>
    <property type="project" value="MGI"/>
</dbReference>
<dbReference type="GO" id="GO:0005143">
    <property type="term" value="F:interleukin-12 receptor binding"/>
    <property type="evidence" value="ECO:0007669"/>
    <property type="project" value="Ensembl"/>
</dbReference>
<dbReference type="GO" id="GO:0042019">
    <property type="term" value="F:interleukin-23 binding"/>
    <property type="evidence" value="ECO:0000266"/>
    <property type="project" value="MGI"/>
</dbReference>
<dbReference type="GO" id="GO:0042020">
    <property type="term" value="F:interleukin-23 receptor activity"/>
    <property type="evidence" value="ECO:0000266"/>
    <property type="project" value="MGI"/>
</dbReference>
<dbReference type="GO" id="GO:0007259">
    <property type="term" value="P:cell surface receptor signaling pathway via JAK-STAT"/>
    <property type="evidence" value="ECO:0000266"/>
    <property type="project" value="MGI"/>
</dbReference>
<dbReference type="GO" id="GO:0019221">
    <property type="term" value="P:cytokine-mediated signaling pathway"/>
    <property type="evidence" value="ECO:0000266"/>
    <property type="project" value="MGI"/>
</dbReference>
<dbReference type="GO" id="GO:0006954">
    <property type="term" value="P:inflammatory response"/>
    <property type="evidence" value="ECO:0007669"/>
    <property type="project" value="UniProtKB-KW"/>
</dbReference>
<dbReference type="GO" id="GO:0002443">
    <property type="term" value="P:leukocyte mediated immunity"/>
    <property type="evidence" value="ECO:0000266"/>
    <property type="project" value="MGI"/>
</dbReference>
<dbReference type="GO" id="GO:0032693">
    <property type="term" value="P:negative regulation of interleukin-10 production"/>
    <property type="evidence" value="ECO:0007669"/>
    <property type="project" value="Ensembl"/>
</dbReference>
<dbReference type="GO" id="GO:0002230">
    <property type="term" value="P:positive regulation of defense response to virus by host"/>
    <property type="evidence" value="ECO:0007669"/>
    <property type="project" value="Ensembl"/>
</dbReference>
<dbReference type="GO" id="GO:0032735">
    <property type="term" value="P:positive regulation of interleukin-12 production"/>
    <property type="evidence" value="ECO:0007669"/>
    <property type="project" value="Ensembl"/>
</dbReference>
<dbReference type="GO" id="GO:0002827">
    <property type="term" value="P:positive regulation of T-helper 1 type immune response"/>
    <property type="evidence" value="ECO:0007669"/>
    <property type="project" value="Ensembl"/>
</dbReference>
<dbReference type="GO" id="GO:0032729">
    <property type="term" value="P:positive regulation of type II interferon production"/>
    <property type="evidence" value="ECO:0007669"/>
    <property type="project" value="Ensembl"/>
</dbReference>
<dbReference type="GO" id="GO:0032496">
    <property type="term" value="P:response to lipopolysaccharide"/>
    <property type="evidence" value="ECO:0007669"/>
    <property type="project" value="Ensembl"/>
</dbReference>
<dbReference type="GO" id="GO:0034341">
    <property type="term" value="P:response to type II interferon"/>
    <property type="evidence" value="ECO:0007669"/>
    <property type="project" value="Ensembl"/>
</dbReference>
<dbReference type="CDD" id="cd00063">
    <property type="entry name" value="FN3"/>
    <property type="match status" value="1"/>
</dbReference>
<dbReference type="FunFam" id="2.60.40.10:FF:001364">
    <property type="entry name" value="Interleukin 23 receptor"/>
    <property type="match status" value="1"/>
</dbReference>
<dbReference type="FunFam" id="2.60.40.10:FF:001392">
    <property type="entry name" value="Interleukin 23 receptor"/>
    <property type="match status" value="1"/>
</dbReference>
<dbReference type="Gene3D" id="2.60.40.10">
    <property type="entry name" value="Immunoglobulins"/>
    <property type="match status" value="2"/>
</dbReference>
<dbReference type="InterPro" id="IPR003961">
    <property type="entry name" value="FN3_dom"/>
</dbReference>
<dbReference type="InterPro" id="IPR036116">
    <property type="entry name" value="FN3_sf"/>
</dbReference>
<dbReference type="InterPro" id="IPR013783">
    <property type="entry name" value="Ig-like_fold"/>
</dbReference>
<dbReference type="InterPro" id="IPR052672">
    <property type="entry name" value="Type1_Cytokine_Rcpt_Type2"/>
</dbReference>
<dbReference type="PANTHER" id="PTHR48423:SF2">
    <property type="entry name" value="INTERLEUKIN-12 RECEPTOR SUBUNIT BETA-2"/>
    <property type="match status" value="1"/>
</dbReference>
<dbReference type="PANTHER" id="PTHR48423">
    <property type="entry name" value="INTERLEUKIN-27 RECEPTOR SUBUNIT ALPHA"/>
    <property type="match status" value="1"/>
</dbReference>
<dbReference type="SUPFAM" id="SSF49265">
    <property type="entry name" value="Fibronectin type III"/>
    <property type="match status" value="2"/>
</dbReference>
<dbReference type="PROSITE" id="PS50853">
    <property type="entry name" value="FN3"/>
    <property type="match status" value="2"/>
</dbReference>
<keyword id="KW-1003">Cell membrane</keyword>
<keyword id="KW-0325">Glycoprotein</keyword>
<keyword id="KW-0391">Immunity</keyword>
<keyword id="KW-0395">Inflammatory response</keyword>
<keyword id="KW-0399">Innate immunity</keyword>
<keyword id="KW-0472">Membrane</keyword>
<keyword id="KW-0597">Phosphoprotein</keyword>
<keyword id="KW-0675">Receptor</keyword>
<keyword id="KW-1185">Reference proteome</keyword>
<keyword id="KW-0677">Repeat</keyword>
<keyword id="KW-0732">Signal</keyword>
<keyword id="KW-0812">Transmembrane</keyword>
<keyword id="KW-1133">Transmembrane helix</keyword>
<gene>
    <name type="primary">Il23r</name>
</gene>
<organism>
    <name type="scientific">Mus musculus</name>
    <name type="common">Mouse</name>
    <dbReference type="NCBI Taxonomy" id="10090"/>
    <lineage>
        <taxon>Eukaryota</taxon>
        <taxon>Metazoa</taxon>
        <taxon>Chordata</taxon>
        <taxon>Craniata</taxon>
        <taxon>Vertebrata</taxon>
        <taxon>Euteleostomi</taxon>
        <taxon>Mammalia</taxon>
        <taxon>Eutheria</taxon>
        <taxon>Euarchontoglires</taxon>
        <taxon>Glires</taxon>
        <taxon>Rodentia</taxon>
        <taxon>Myomorpha</taxon>
        <taxon>Muroidea</taxon>
        <taxon>Muridae</taxon>
        <taxon>Murinae</taxon>
        <taxon>Mus</taxon>
        <taxon>Mus</taxon>
    </lineage>
</organism>
<sequence>MSHLTLQLHVVIALYVLFRWCHGGITSINCSGDMWVEPGEIFQMGMNVSIYCQEALKHCRPRNLYFYKNGFKEEFDITRINRTTARIWYKGFSEPHAYMHCTAECPGHFQETLICGKDISSGHPPDAPSNLTCVIYEYSGNMTCTWNTGKPTYIDTKYIVHVKSLETEEEQQYLASSYVKISTDSLQGSRKYLVWVQAVNSLGMENSQQLHVHLDDIVIPSASIISRAETTNDTVPKTIVYWKSKTMIEKVFCEMRYKTTTNQTWSVKEFDANFTYVQQSEFYLEPDSKYVFQVRCQETGKRNWQPWSSPFVHQTSQETGKRNWQPWSSPFVHQTSQTVSQVTAKSSHEPQKMEMLSATIFRGHPASGNHQDIGLLSGMVFLAIMLPIFSLIGIFNRSLRIGIKRKVLLMIPKWLYEDIPNMENSNVAKLLQEKSVFENDNASEQALYVDPVLTEISEISPLEHKPTDYKEERLTGLLETRDCPLGMLSTSSSVVYIPDLNTGYKPQVSNVPPGGNLFINRDERDPTSLETTDDHFARLKTYPNFQFSASSMALLNKTLILDELCLVLNQGEFNSLDIKNSRQEETSIVLQSDSPSETIPAQTLLSDEFVSCLAIGNEDLPSINSYFPQNVLESHFSRISLFQK</sequence>
<comment type="function">
    <text evidence="1">Associates with IL12RB1 to form the interleukin-23 receptor. Binds IL23 and mediates T-cells, NK cells and possibly certain macrophage/myeloid cells stimulation probably through activation of the Jak-Stat signaling cascade. IL23 functions in innate and adaptive immunity and may participate in acute response to infection in peripheral tissues. IL23 may be responsible for autoimmune inflammatory diseases and be important for tumorigenesis (By similarity).</text>
</comment>
<comment type="subunit">
    <text evidence="1">Heterodimer with IL12RB1. In presence of IL23, the heterodimer forms the IL23 receptor. Interacts with JAK2 and in presence of IL23 with STAT3 (By similarity).</text>
</comment>
<comment type="subcellular location">
    <subcellularLocation>
        <location evidence="1">Cell membrane</location>
        <topology evidence="1">Single-pass type I membrane protein</topology>
    </subcellularLocation>
</comment>
<comment type="tissue specificity">
    <text evidence="4">Expressed by Th1, Th2 and dendritic cells.</text>
</comment>
<comment type="PTM">
    <text evidence="1">Phosphorylated in response to IL23.</text>
</comment>
<comment type="similarity">
    <text evidence="5">Belongs to the type I cytokine receptor family. Type 2 subfamily.</text>
</comment>
<feature type="signal peptide" evidence="2">
    <location>
        <begin position="1"/>
        <end position="23"/>
    </location>
</feature>
<feature type="chain" id="PRO_0000268663" description="Interleukin-23 receptor">
    <location>
        <begin position="24"/>
        <end position="644"/>
    </location>
</feature>
<feature type="topological domain" description="Extracellular" evidence="2">
    <location>
        <begin position="24"/>
        <end position="374"/>
    </location>
</feature>
<feature type="transmembrane region" description="Helical" evidence="2">
    <location>
        <begin position="375"/>
        <end position="395"/>
    </location>
</feature>
<feature type="topological domain" description="Cytoplasmic" evidence="2">
    <location>
        <begin position="396"/>
        <end position="644"/>
    </location>
</feature>
<feature type="domain" description="Fibronectin type-III 1" evidence="3">
    <location>
        <begin position="127"/>
        <end position="217"/>
    </location>
</feature>
<feature type="domain" description="Fibronectin type-III 2" evidence="3">
    <location>
        <begin position="219"/>
        <end position="318"/>
    </location>
</feature>
<feature type="glycosylation site" description="N-linked (GlcNAc...) asparagine" evidence="2">
    <location>
        <position position="47"/>
    </location>
</feature>
<feature type="glycosylation site" description="N-linked (GlcNAc...) asparagine" evidence="2">
    <location>
        <position position="130"/>
    </location>
</feature>
<feature type="glycosylation site" description="N-linked (GlcNAc...) asparagine" evidence="2">
    <location>
        <position position="232"/>
    </location>
</feature>
<evidence type="ECO:0000250" key="1"/>
<evidence type="ECO:0000255" key="2"/>
<evidence type="ECO:0000255" key="3">
    <source>
        <dbReference type="PROSITE-ProRule" id="PRU00316"/>
    </source>
</evidence>
<evidence type="ECO:0000269" key="4">
    <source>
    </source>
</evidence>
<evidence type="ECO:0000305" key="5"/>
<reference key="1">
    <citation type="journal article" date="2002" name="J. Immunol.">
        <title>A receptor for the heterodimeric cytokine IL-23 is composed of IL-12Rbeta1 and a novel cytokine receptor subunit, IL-23R.</title>
        <authorList>
            <person name="Parham C."/>
            <person name="Chirica M."/>
            <person name="Timans J."/>
            <person name="Vaisberg E."/>
            <person name="Travis M."/>
            <person name="Cheung J."/>
            <person name="Pflanz S."/>
            <person name="Zhang R."/>
            <person name="Singh K.P."/>
            <person name="Vega F."/>
            <person name="To W."/>
            <person name="Wagner J."/>
            <person name="O'Farrell A.-M."/>
            <person name="McClanahan T.K."/>
            <person name="Zurawski S."/>
            <person name="Hannum C."/>
            <person name="Gorman D."/>
            <person name="Rennick D.M."/>
            <person name="Kastelein R.A."/>
            <person name="de Waal Malefyt R."/>
            <person name="Moore K.W."/>
        </authorList>
    </citation>
    <scope>NUCLEOTIDE SEQUENCE [MRNA]</scope>
    <scope>TISSUE SPECIFICITY</scope>
    <source>
        <strain>BALB/cJ</strain>
        <tissue>T-cell</tissue>
    </source>
</reference>
<reference key="2">
    <citation type="journal article" date="2004" name="Genome Res.">
        <title>The status, quality, and expansion of the NIH full-length cDNA project: the Mammalian Gene Collection (MGC).</title>
        <authorList>
            <consortium name="The MGC Project Team"/>
        </authorList>
    </citation>
    <scope>NUCLEOTIDE SEQUENCE [LARGE SCALE MRNA]</scope>
</reference>
<proteinExistence type="evidence at transcript level"/>
<protein>
    <recommendedName>
        <fullName>Interleukin-23 receptor</fullName>
        <shortName>IL-23 receptor</shortName>
        <shortName>IL-23R</shortName>
    </recommendedName>
</protein>
<name>IL23R_MOUSE</name>
<accession>Q8K4B4</accession>